<comment type="function">
    <text evidence="1">Catalyzes the hydrolysis of glutamine to glutamate and ammonia as part of the biosynthesis of pyridoxal 5'-phosphate. The resulting ammonia molecule is channeled to the active site of PdxS.</text>
</comment>
<comment type="catalytic activity">
    <reaction evidence="1">
        <text>aldehydo-D-ribose 5-phosphate + D-glyceraldehyde 3-phosphate + L-glutamine = pyridoxal 5'-phosphate + L-glutamate + phosphate + 3 H2O + H(+)</text>
        <dbReference type="Rhea" id="RHEA:31507"/>
        <dbReference type="ChEBI" id="CHEBI:15377"/>
        <dbReference type="ChEBI" id="CHEBI:15378"/>
        <dbReference type="ChEBI" id="CHEBI:29985"/>
        <dbReference type="ChEBI" id="CHEBI:43474"/>
        <dbReference type="ChEBI" id="CHEBI:58273"/>
        <dbReference type="ChEBI" id="CHEBI:58359"/>
        <dbReference type="ChEBI" id="CHEBI:59776"/>
        <dbReference type="ChEBI" id="CHEBI:597326"/>
        <dbReference type="EC" id="4.3.3.6"/>
    </reaction>
</comment>
<comment type="catalytic activity">
    <reaction evidence="1">
        <text>L-glutamine + H2O = L-glutamate + NH4(+)</text>
        <dbReference type="Rhea" id="RHEA:15889"/>
        <dbReference type="ChEBI" id="CHEBI:15377"/>
        <dbReference type="ChEBI" id="CHEBI:28938"/>
        <dbReference type="ChEBI" id="CHEBI:29985"/>
        <dbReference type="ChEBI" id="CHEBI:58359"/>
        <dbReference type="EC" id="3.5.1.2"/>
    </reaction>
</comment>
<comment type="pathway">
    <text evidence="1">Cofactor biosynthesis; pyridoxal 5'-phosphate biosynthesis.</text>
</comment>
<comment type="subunit">
    <text evidence="1">In the presence of PdxS, forms a dodecamer of heterodimers. Only shows activity in the heterodimer.</text>
</comment>
<comment type="similarity">
    <text evidence="1">Belongs to the glutaminase PdxT/SNO family.</text>
</comment>
<reference key="1">
    <citation type="submission" date="2008-06" db="EMBL/GenBank/DDBJ databases">
        <title>Genome and proteome analysis of A. pleuropneumoniae serotype 7.</title>
        <authorList>
            <person name="Linke B."/>
            <person name="Buettner F."/>
            <person name="Martinez-Arias R."/>
            <person name="Goesmann A."/>
            <person name="Baltes N."/>
            <person name="Tegetmeyer H."/>
            <person name="Singh M."/>
            <person name="Gerlach G.F."/>
        </authorList>
    </citation>
    <scope>NUCLEOTIDE SEQUENCE [LARGE SCALE GENOMIC DNA]</scope>
    <source>
        <strain>AP76</strain>
    </source>
</reference>
<dbReference type="EC" id="4.3.3.6" evidence="1"/>
<dbReference type="EC" id="3.5.1.2" evidence="1"/>
<dbReference type="EMBL" id="CP001091">
    <property type="protein sequence ID" value="ACE61269.1"/>
    <property type="molecule type" value="Genomic_DNA"/>
</dbReference>
<dbReference type="RefSeq" id="WP_005600690.1">
    <property type="nucleotide sequence ID" value="NC_010939.1"/>
</dbReference>
<dbReference type="SMR" id="B3GXB7"/>
<dbReference type="MEROPS" id="C26.A32"/>
<dbReference type="KEGG" id="apa:APP7_0617"/>
<dbReference type="HOGENOM" id="CLU_069674_2_0_6"/>
<dbReference type="UniPathway" id="UPA00245"/>
<dbReference type="PHI-base" id="PHI:7076"/>
<dbReference type="Proteomes" id="UP000001226">
    <property type="component" value="Chromosome"/>
</dbReference>
<dbReference type="GO" id="GO:0005829">
    <property type="term" value="C:cytosol"/>
    <property type="evidence" value="ECO:0007669"/>
    <property type="project" value="TreeGrafter"/>
</dbReference>
<dbReference type="GO" id="GO:1903600">
    <property type="term" value="C:glutaminase complex"/>
    <property type="evidence" value="ECO:0007669"/>
    <property type="project" value="TreeGrafter"/>
</dbReference>
<dbReference type="GO" id="GO:0004359">
    <property type="term" value="F:glutaminase activity"/>
    <property type="evidence" value="ECO:0007669"/>
    <property type="project" value="UniProtKB-UniRule"/>
</dbReference>
<dbReference type="GO" id="GO:0036381">
    <property type="term" value="F:pyridoxal 5'-phosphate synthase (glutamine hydrolysing) activity"/>
    <property type="evidence" value="ECO:0007669"/>
    <property type="project" value="UniProtKB-UniRule"/>
</dbReference>
<dbReference type="GO" id="GO:0006543">
    <property type="term" value="P:glutamine catabolic process"/>
    <property type="evidence" value="ECO:0007669"/>
    <property type="project" value="UniProtKB-UniRule"/>
</dbReference>
<dbReference type="GO" id="GO:0042823">
    <property type="term" value="P:pyridoxal phosphate biosynthetic process"/>
    <property type="evidence" value="ECO:0007669"/>
    <property type="project" value="UniProtKB-UniRule"/>
</dbReference>
<dbReference type="GO" id="GO:0008614">
    <property type="term" value="P:pyridoxine metabolic process"/>
    <property type="evidence" value="ECO:0007669"/>
    <property type="project" value="TreeGrafter"/>
</dbReference>
<dbReference type="CDD" id="cd01749">
    <property type="entry name" value="GATase1_PB"/>
    <property type="match status" value="1"/>
</dbReference>
<dbReference type="FunFam" id="3.40.50.880:FF:000010">
    <property type="entry name" value="uncharacterized protein LOC100176842 isoform X2"/>
    <property type="match status" value="1"/>
</dbReference>
<dbReference type="Gene3D" id="3.40.50.880">
    <property type="match status" value="1"/>
</dbReference>
<dbReference type="HAMAP" id="MF_01615">
    <property type="entry name" value="PdxT"/>
    <property type="match status" value="1"/>
</dbReference>
<dbReference type="InterPro" id="IPR029062">
    <property type="entry name" value="Class_I_gatase-like"/>
</dbReference>
<dbReference type="InterPro" id="IPR002161">
    <property type="entry name" value="PdxT/SNO"/>
</dbReference>
<dbReference type="InterPro" id="IPR021196">
    <property type="entry name" value="PdxT/SNO_CS"/>
</dbReference>
<dbReference type="NCBIfam" id="TIGR03800">
    <property type="entry name" value="PLP_synth_Pdx2"/>
    <property type="match status" value="1"/>
</dbReference>
<dbReference type="PANTHER" id="PTHR31559">
    <property type="entry name" value="PYRIDOXAL 5'-PHOSPHATE SYNTHASE SUBUNIT SNO"/>
    <property type="match status" value="1"/>
</dbReference>
<dbReference type="PANTHER" id="PTHR31559:SF0">
    <property type="entry name" value="PYRIDOXAL 5'-PHOSPHATE SYNTHASE SUBUNIT SNO1-RELATED"/>
    <property type="match status" value="1"/>
</dbReference>
<dbReference type="Pfam" id="PF01174">
    <property type="entry name" value="SNO"/>
    <property type="match status" value="1"/>
</dbReference>
<dbReference type="PIRSF" id="PIRSF005639">
    <property type="entry name" value="Glut_amidoT_SNO"/>
    <property type="match status" value="1"/>
</dbReference>
<dbReference type="SUPFAM" id="SSF52317">
    <property type="entry name" value="Class I glutamine amidotransferase-like"/>
    <property type="match status" value="1"/>
</dbReference>
<dbReference type="PROSITE" id="PS01236">
    <property type="entry name" value="PDXT_SNO_1"/>
    <property type="match status" value="1"/>
</dbReference>
<dbReference type="PROSITE" id="PS51130">
    <property type="entry name" value="PDXT_SNO_2"/>
    <property type="match status" value="1"/>
</dbReference>
<proteinExistence type="inferred from homology"/>
<evidence type="ECO:0000255" key="1">
    <source>
        <dbReference type="HAMAP-Rule" id="MF_01615"/>
    </source>
</evidence>
<gene>
    <name evidence="1" type="primary">pdxT</name>
    <name type="ordered locus">APP7_0617</name>
</gene>
<name>PDXT_ACTP7</name>
<feature type="chain" id="PRO_1000185866" description="Pyridoxal 5'-phosphate synthase subunit PdxT">
    <location>
        <begin position="1"/>
        <end position="191"/>
    </location>
</feature>
<feature type="active site" description="Nucleophile" evidence="1">
    <location>
        <position position="81"/>
    </location>
</feature>
<feature type="active site" description="Charge relay system" evidence="1">
    <location>
        <position position="172"/>
    </location>
</feature>
<feature type="active site" description="Charge relay system" evidence="1">
    <location>
        <position position="174"/>
    </location>
</feature>
<feature type="binding site" evidence="1">
    <location>
        <begin position="52"/>
        <end position="54"/>
    </location>
    <ligand>
        <name>L-glutamine</name>
        <dbReference type="ChEBI" id="CHEBI:58359"/>
    </ligand>
</feature>
<feature type="binding site" evidence="1">
    <location>
        <position position="108"/>
    </location>
    <ligand>
        <name>L-glutamine</name>
        <dbReference type="ChEBI" id="CHEBI:58359"/>
    </ligand>
</feature>
<feature type="binding site" evidence="1">
    <location>
        <begin position="136"/>
        <end position="137"/>
    </location>
    <ligand>
        <name>L-glutamine</name>
        <dbReference type="ChEBI" id="CHEBI:58359"/>
    </ligand>
</feature>
<sequence>MNDYTKYTIGVLSLQGAVSEHIAQIETLGAKAIAVKSLSELQQVDALVLPGGESTAMRRLMHSSGLFQALKSFDKPILGTCAGLILLANKLEGGEPPHLAKMNIQVQRNAFGRQVDSFQTDLMIKGFADPFPAVFIRAPYISRIGSEVEVLAEWQGNVVFAKQGNLLACAFHPELTSDTRVVELFLQQLKE</sequence>
<organism>
    <name type="scientific">Actinobacillus pleuropneumoniae serotype 7 (strain AP76)</name>
    <dbReference type="NCBI Taxonomy" id="537457"/>
    <lineage>
        <taxon>Bacteria</taxon>
        <taxon>Pseudomonadati</taxon>
        <taxon>Pseudomonadota</taxon>
        <taxon>Gammaproteobacteria</taxon>
        <taxon>Pasteurellales</taxon>
        <taxon>Pasteurellaceae</taxon>
        <taxon>Actinobacillus</taxon>
    </lineage>
</organism>
<protein>
    <recommendedName>
        <fullName evidence="1">Pyridoxal 5'-phosphate synthase subunit PdxT</fullName>
        <ecNumber evidence="1">4.3.3.6</ecNumber>
    </recommendedName>
    <alternativeName>
        <fullName evidence="1">Pdx2</fullName>
    </alternativeName>
    <alternativeName>
        <fullName evidence="1">Pyridoxal 5'-phosphate synthase glutaminase subunit</fullName>
        <ecNumber evidence="1">3.5.1.2</ecNumber>
    </alternativeName>
</protein>
<keyword id="KW-0315">Glutamine amidotransferase</keyword>
<keyword id="KW-0378">Hydrolase</keyword>
<keyword id="KW-0456">Lyase</keyword>
<keyword id="KW-0663">Pyridoxal phosphate</keyword>
<accession>B3GXB7</accession>